<dbReference type="EMBL" id="AK011308">
    <property type="protein sequence ID" value="BAB27534.1"/>
    <property type="status" value="ALT_INIT"/>
    <property type="molecule type" value="mRNA"/>
</dbReference>
<dbReference type="EMBL" id="AK148079">
    <property type="protein sequence ID" value="BAE28331.1"/>
    <property type="status" value="ALT_INIT"/>
    <property type="molecule type" value="mRNA"/>
</dbReference>
<dbReference type="EMBL" id="AK155810">
    <property type="protein sequence ID" value="BAE33443.1"/>
    <property type="status" value="ALT_INIT"/>
    <property type="molecule type" value="mRNA"/>
</dbReference>
<dbReference type="EMBL" id="AK172073">
    <property type="protein sequence ID" value="BAE42811.1"/>
    <property type="status" value="ALT_FRAME"/>
    <property type="molecule type" value="mRNA"/>
</dbReference>
<dbReference type="EMBL" id="AC159277">
    <property type="status" value="NOT_ANNOTATED_CDS"/>
    <property type="molecule type" value="Genomic_DNA"/>
</dbReference>
<dbReference type="EMBL" id="BC010800">
    <property type="protein sequence ID" value="AAH10800.1"/>
    <property type="status" value="ALT_INIT"/>
    <property type="molecule type" value="mRNA"/>
</dbReference>
<dbReference type="CCDS" id="CCDS28532.2"/>
<dbReference type="RefSeq" id="NP_082377.3">
    <property type="nucleotide sequence ID" value="NM_028101.5"/>
</dbReference>
<dbReference type="SMR" id="Q3TA59"/>
<dbReference type="FunCoup" id="Q3TA59">
    <property type="interactions" value="2031"/>
</dbReference>
<dbReference type="STRING" id="10090.ENSMUSP00000026832"/>
<dbReference type="GlyCosmos" id="Q3TA59">
    <property type="glycosylation" value="3 sites, No reported glycans"/>
</dbReference>
<dbReference type="GlyGen" id="Q3TA59">
    <property type="glycosylation" value="3 sites"/>
</dbReference>
<dbReference type="PhosphoSitePlus" id="Q3TA59"/>
<dbReference type="PaxDb" id="10090-ENSMUSP00000122744"/>
<dbReference type="ProteomicsDB" id="301699"/>
<dbReference type="Pumba" id="Q3TA59"/>
<dbReference type="Antibodypedia" id="22813">
    <property type="antibodies" value="96 antibodies from 22 providers"/>
</dbReference>
<dbReference type="DNASU" id="72106"/>
<dbReference type="Ensembl" id="ENSMUST00000133595.9">
    <property type="protein sequence ID" value="ENSMUSP00000122744.3"/>
    <property type="gene ID" value="ENSMUSG00000025736.16"/>
</dbReference>
<dbReference type="GeneID" id="72106"/>
<dbReference type="KEGG" id="mmu:72106"/>
<dbReference type="UCSC" id="uc008bce.2">
    <property type="organism name" value="mouse"/>
</dbReference>
<dbReference type="AGR" id="MGI:1919356"/>
<dbReference type="CTD" id="339123"/>
<dbReference type="MGI" id="MGI:1919356">
    <property type="gene designation" value="Jmjd8"/>
</dbReference>
<dbReference type="VEuPathDB" id="HostDB:ENSMUSG00000025736"/>
<dbReference type="eggNOG" id="KOG2131">
    <property type="taxonomic scope" value="Eukaryota"/>
</dbReference>
<dbReference type="GeneTree" id="ENSGT00390000015438"/>
<dbReference type="InParanoid" id="Q3TA59"/>
<dbReference type="OMA" id="KEPHFHP"/>
<dbReference type="OrthoDB" id="438164at2759"/>
<dbReference type="PhylomeDB" id="Q3TA59"/>
<dbReference type="TreeFam" id="TF313408"/>
<dbReference type="BioGRID-ORCS" id="72106">
    <property type="hits" value="2 hits in 80 CRISPR screens"/>
</dbReference>
<dbReference type="ChiTaRS" id="Jmjd8">
    <property type="organism name" value="mouse"/>
</dbReference>
<dbReference type="PRO" id="PR:Q3TA59"/>
<dbReference type="Proteomes" id="UP000000589">
    <property type="component" value="Chromosome 17"/>
</dbReference>
<dbReference type="RNAct" id="Q3TA59">
    <property type="molecule type" value="protein"/>
</dbReference>
<dbReference type="Bgee" id="ENSMUSG00000025736">
    <property type="expression patterns" value="Expressed in embryonic brain and 241 other cell types or tissues"/>
</dbReference>
<dbReference type="ExpressionAtlas" id="Q3TA59">
    <property type="expression patterns" value="baseline and differential"/>
</dbReference>
<dbReference type="GO" id="GO:0005737">
    <property type="term" value="C:cytoplasm"/>
    <property type="evidence" value="ECO:0000314"/>
    <property type="project" value="MGI"/>
</dbReference>
<dbReference type="GO" id="GO:0005783">
    <property type="term" value="C:endoplasmic reticulum"/>
    <property type="evidence" value="ECO:0000250"/>
    <property type="project" value="UniProtKB"/>
</dbReference>
<dbReference type="GO" id="GO:0005788">
    <property type="term" value="C:endoplasmic reticulum lumen"/>
    <property type="evidence" value="ECO:0000250"/>
    <property type="project" value="UniProtKB"/>
</dbReference>
<dbReference type="GO" id="GO:0005634">
    <property type="term" value="C:nucleus"/>
    <property type="evidence" value="ECO:0000250"/>
    <property type="project" value="UniProtKB"/>
</dbReference>
<dbReference type="GO" id="GO:0045333">
    <property type="term" value="P:cellular respiration"/>
    <property type="evidence" value="ECO:0000314"/>
    <property type="project" value="MGI"/>
</dbReference>
<dbReference type="GO" id="GO:0043123">
    <property type="term" value="P:positive regulation of canonical NF-kappaB signal transduction"/>
    <property type="evidence" value="ECO:0000250"/>
    <property type="project" value="UniProtKB"/>
</dbReference>
<dbReference type="GO" id="GO:1903672">
    <property type="term" value="P:positive regulation of sprouting angiogenesis"/>
    <property type="evidence" value="ECO:0000250"/>
    <property type="project" value="UniProtKB"/>
</dbReference>
<dbReference type="GO" id="GO:0006110">
    <property type="term" value="P:regulation of glycolytic process"/>
    <property type="evidence" value="ECO:0000250"/>
    <property type="project" value="UniProtKB"/>
</dbReference>
<dbReference type="GO" id="GO:1903302">
    <property type="term" value="P:regulation of pyruvate kinase activity"/>
    <property type="evidence" value="ECO:0000250"/>
    <property type="project" value="UniProtKB"/>
</dbReference>
<dbReference type="GO" id="GO:0002040">
    <property type="term" value="P:sprouting angiogenesis"/>
    <property type="evidence" value="ECO:0000315"/>
    <property type="project" value="MGI"/>
</dbReference>
<dbReference type="FunFam" id="2.60.120.650:FF:000039">
    <property type="entry name" value="JmjC domain-containing protein 8"/>
    <property type="match status" value="1"/>
</dbReference>
<dbReference type="Gene3D" id="2.60.120.650">
    <property type="entry name" value="Cupin"/>
    <property type="match status" value="1"/>
</dbReference>
<dbReference type="InterPro" id="IPR041667">
    <property type="entry name" value="Cupin_8"/>
</dbReference>
<dbReference type="InterPro" id="IPR003347">
    <property type="entry name" value="JmjC_dom"/>
</dbReference>
<dbReference type="InterPro" id="IPR050910">
    <property type="entry name" value="JMJD6_ArgDemeth/LysHydrox"/>
</dbReference>
<dbReference type="PANTHER" id="PTHR12480">
    <property type="entry name" value="ARGININE DEMETHYLASE AND LYSYL-HYDROXYLASE JMJD"/>
    <property type="match status" value="1"/>
</dbReference>
<dbReference type="PANTHER" id="PTHR12480:SF21">
    <property type="entry name" value="JMJC DOMAIN-CONTAINING PROTEIN 8"/>
    <property type="match status" value="1"/>
</dbReference>
<dbReference type="Pfam" id="PF13621">
    <property type="entry name" value="Cupin_8"/>
    <property type="match status" value="1"/>
</dbReference>
<dbReference type="SUPFAM" id="SSF51197">
    <property type="entry name" value="Clavaminate synthase-like"/>
    <property type="match status" value="1"/>
</dbReference>
<dbReference type="PROSITE" id="PS51184">
    <property type="entry name" value="JMJC"/>
    <property type="match status" value="1"/>
</dbReference>
<keyword id="KW-0963">Cytoplasm</keyword>
<keyword id="KW-0256">Endoplasmic reticulum</keyword>
<keyword id="KW-0325">Glycoprotein</keyword>
<keyword id="KW-1185">Reference proteome</keyword>
<keyword id="KW-0732">Signal</keyword>
<organism>
    <name type="scientific">Mus musculus</name>
    <name type="common">Mouse</name>
    <dbReference type="NCBI Taxonomy" id="10090"/>
    <lineage>
        <taxon>Eukaryota</taxon>
        <taxon>Metazoa</taxon>
        <taxon>Chordata</taxon>
        <taxon>Craniata</taxon>
        <taxon>Vertebrata</taxon>
        <taxon>Euteleostomi</taxon>
        <taxon>Mammalia</taxon>
        <taxon>Eutheria</taxon>
        <taxon>Euarchontoglires</taxon>
        <taxon>Glires</taxon>
        <taxon>Rodentia</taxon>
        <taxon>Myomorpha</taxon>
        <taxon>Muroidea</taxon>
        <taxon>Muridae</taxon>
        <taxon>Murinae</taxon>
        <taxon>Mus</taxon>
        <taxon>Mus</taxon>
    </lineage>
</organism>
<reference key="1">
    <citation type="journal article" date="2005" name="Science">
        <title>The transcriptional landscape of the mammalian genome.</title>
        <authorList>
            <person name="Carninci P."/>
            <person name="Kasukawa T."/>
            <person name="Katayama S."/>
            <person name="Gough J."/>
            <person name="Frith M.C."/>
            <person name="Maeda N."/>
            <person name="Oyama R."/>
            <person name="Ravasi T."/>
            <person name="Lenhard B."/>
            <person name="Wells C."/>
            <person name="Kodzius R."/>
            <person name="Shimokawa K."/>
            <person name="Bajic V.B."/>
            <person name="Brenner S.E."/>
            <person name="Batalov S."/>
            <person name="Forrest A.R."/>
            <person name="Zavolan M."/>
            <person name="Davis M.J."/>
            <person name="Wilming L.G."/>
            <person name="Aidinis V."/>
            <person name="Allen J.E."/>
            <person name="Ambesi-Impiombato A."/>
            <person name="Apweiler R."/>
            <person name="Aturaliya R.N."/>
            <person name="Bailey T.L."/>
            <person name="Bansal M."/>
            <person name="Baxter L."/>
            <person name="Beisel K.W."/>
            <person name="Bersano T."/>
            <person name="Bono H."/>
            <person name="Chalk A.M."/>
            <person name="Chiu K.P."/>
            <person name="Choudhary V."/>
            <person name="Christoffels A."/>
            <person name="Clutterbuck D.R."/>
            <person name="Crowe M.L."/>
            <person name="Dalla E."/>
            <person name="Dalrymple B.P."/>
            <person name="de Bono B."/>
            <person name="Della Gatta G."/>
            <person name="di Bernardo D."/>
            <person name="Down T."/>
            <person name="Engstrom P."/>
            <person name="Fagiolini M."/>
            <person name="Faulkner G."/>
            <person name="Fletcher C.F."/>
            <person name="Fukushima T."/>
            <person name="Furuno M."/>
            <person name="Futaki S."/>
            <person name="Gariboldi M."/>
            <person name="Georgii-Hemming P."/>
            <person name="Gingeras T.R."/>
            <person name="Gojobori T."/>
            <person name="Green R.E."/>
            <person name="Gustincich S."/>
            <person name="Harbers M."/>
            <person name="Hayashi Y."/>
            <person name="Hensch T.K."/>
            <person name="Hirokawa N."/>
            <person name="Hill D."/>
            <person name="Huminiecki L."/>
            <person name="Iacono M."/>
            <person name="Ikeo K."/>
            <person name="Iwama A."/>
            <person name="Ishikawa T."/>
            <person name="Jakt M."/>
            <person name="Kanapin A."/>
            <person name="Katoh M."/>
            <person name="Kawasawa Y."/>
            <person name="Kelso J."/>
            <person name="Kitamura H."/>
            <person name="Kitano H."/>
            <person name="Kollias G."/>
            <person name="Krishnan S.P."/>
            <person name="Kruger A."/>
            <person name="Kummerfeld S.K."/>
            <person name="Kurochkin I.V."/>
            <person name="Lareau L.F."/>
            <person name="Lazarevic D."/>
            <person name="Lipovich L."/>
            <person name="Liu J."/>
            <person name="Liuni S."/>
            <person name="McWilliam S."/>
            <person name="Madan Babu M."/>
            <person name="Madera M."/>
            <person name="Marchionni L."/>
            <person name="Matsuda H."/>
            <person name="Matsuzawa S."/>
            <person name="Miki H."/>
            <person name="Mignone F."/>
            <person name="Miyake S."/>
            <person name="Morris K."/>
            <person name="Mottagui-Tabar S."/>
            <person name="Mulder N."/>
            <person name="Nakano N."/>
            <person name="Nakauchi H."/>
            <person name="Ng P."/>
            <person name="Nilsson R."/>
            <person name="Nishiguchi S."/>
            <person name="Nishikawa S."/>
            <person name="Nori F."/>
            <person name="Ohara O."/>
            <person name="Okazaki Y."/>
            <person name="Orlando V."/>
            <person name="Pang K.C."/>
            <person name="Pavan W.J."/>
            <person name="Pavesi G."/>
            <person name="Pesole G."/>
            <person name="Petrovsky N."/>
            <person name="Piazza S."/>
            <person name="Reed J."/>
            <person name="Reid J.F."/>
            <person name="Ring B.Z."/>
            <person name="Ringwald M."/>
            <person name="Rost B."/>
            <person name="Ruan Y."/>
            <person name="Salzberg S.L."/>
            <person name="Sandelin A."/>
            <person name="Schneider C."/>
            <person name="Schoenbach C."/>
            <person name="Sekiguchi K."/>
            <person name="Semple C.A."/>
            <person name="Seno S."/>
            <person name="Sessa L."/>
            <person name="Sheng Y."/>
            <person name="Shibata Y."/>
            <person name="Shimada H."/>
            <person name="Shimada K."/>
            <person name="Silva D."/>
            <person name="Sinclair B."/>
            <person name="Sperling S."/>
            <person name="Stupka E."/>
            <person name="Sugiura K."/>
            <person name="Sultana R."/>
            <person name="Takenaka Y."/>
            <person name="Taki K."/>
            <person name="Tammoja K."/>
            <person name="Tan S.L."/>
            <person name="Tang S."/>
            <person name="Taylor M.S."/>
            <person name="Tegner J."/>
            <person name="Teichmann S.A."/>
            <person name="Ueda H.R."/>
            <person name="van Nimwegen E."/>
            <person name="Verardo R."/>
            <person name="Wei C.L."/>
            <person name="Yagi K."/>
            <person name="Yamanishi H."/>
            <person name="Zabarovsky E."/>
            <person name="Zhu S."/>
            <person name="Zimmer A."/>
            <person name="Hide W."/>
            <person name="Bult C."/>
            <person name="Grimmond S.M."/>
            <person name="Teasdale R.D."/>
            <person name="Liu E.T."/>
            <person name="Brusic V."/>
            <person name="Quackenbush J."/>
            <person name="Wahlestedt C."/>
            <person name="Mattick J.S."/>
            <person name="Hume D.A."/>
            <person name="Kai C."/>
            <person name="Sasaki D."/>
            <person name="Tomaru Y."/>
            <person name="Fukuda S."/>
            <person name="Kanamori-Katayama M."/>
            <person name="Suzuki M."/>
            <person name="Aoki J."/>
            <person name="Arakawa T."/>
            <person name="Iida J."/>
            <person name="Imamura K."/>
            <person name="Itoh M."/>
            <person name="Kato T."/>
            <person name="Kawaji H."/>
            <person name="Kawagashira N."/>
            <person name="Kawashima T."/>
            <person name="Kojima M."/>
            <person name="Kondo S."/>
            <person name="Konno H."/>
            <person name="Nakano K."/>
            <person name="Ninomiya N."/>
            <person name="Nishio T."/>
            <person name="Okada M."/>
            <person name="Plessy C."/>
            <person name="Shibata K."/>
            <person name="Shiraki T."/>
            <person name="Suzuki S."/>
            <person name="Tagami M."/>
            <person name="Waki K."/>
            <person name="Watahiki A."/>
            <person name="Okamura-Oho Y."/>
            <person name="Suzuki H."/>
            <person name="Kawai J."/>
            <person name="Hayashizaki Y."/>
        </authorList>
    </citation>
    <scope>NUCLEOTIDE SEQUENCE [LARGE SCALE MRNA]</scope>
    <source>
        <strain>C57BL/6J</strain>
        <strain>NOD</strain>
        <tissue>Spleen</tissue>
    </source>
</reference>
<reference key="2">
    <citation type="journal article" date="2009" name="PLoS Biol.">
        <title>Lineage-specific biology revealed by a finished genome assembly of the mouse.</title>
        <authorList>
            <person name="Church D.M."/>
            <person name="Goodstadt L."/>
            <person name="Hillier L.W."/>
            <person name="Zody M.C."/>
            <person name="Goldstein S."/>
            <person name="She X."/>
            <person name="Bult C.J."/>
            <person name="Agarwala R."/>
            <person name="Cherry J.L."/>
            <person name="DiCuccio M."/>
            <person name="Hlavina W."/>
            <person name="Kapustin Y."/>
            <person name="Meric P."/>
            <person name="Maglott D."/>
            <person name="Birtle Z."/>
            <person name="Marques A.C."/>
            <person name="Graves T."/>
            <person name="Zhou S."/>
            <person name="Teague B."/>
            <person name="Potamousis K."/>
            <person name="Churas C."/>
            <person name="Place M."/>
            <person name="Herschleb J."/>
            <person name="Runnheim R."/>
            <person name="Forrest D."/>
            <person name="Amos-Landgraf J."/>
            <person name="Schwartz D.C."/>
            <person name="Cheng Z."/>
            <person name="Lindblad-Toh K."/>
            <person name="Eichler E.E."/>
            <person name="Ponting C.P."/>
        </authorList>
    </citation>
    <scope>NUCLEOTIDE SEQUENCE [LARGE SCALE GENOMIC DNA]</scope>
    <source>
        <strain>C57BL/6J</strain>
    </source>
</reference>
<reference key="3">
    <citation type="journal article" date="2004" name="Genome Res.">
        <title>The status, quality, and expansion of the NIH full-length cDNA project: the Mammalian Gene Collection (MGC).</title>
        <authorList>
            <consortium name="The MGC Project Team"/>
        </authorList>
    </citation>
    <scope>NUCLEOTIDE SEQUENCE [LARGE SCALE MRNA] OF 4-269</scope>
    <source>
        <strain>FVB/N</strain>
        <tissue>Kidney</tissue>
    </source>
</reference>
<reference key="4">
    <citation type="journal article" date="2016" name="Arterioscler. Thromb. Vasc. Biol.">
        <title>JMJD8 Regulates Angiogenic Sprouting and Cellular Metabolism by Interacting With Pyruvate Kinase M2 in Endothelial Cells.</title>
        <authorList>
            <person name="Boeckel J.N."/>
            <person name="Derlet A."/>
            <person name="Glaser S.F."/>
            <person name="Luczak A."/>
            <person name="Lucas T."/>
            <person name="Heumueller A.W."/>
            <person name="Krueger M."/>
            <person name="Zehendner C.M."/>
            <person name="Kaluza D."/>
            <person name="Doddaballapur A."/>
            <person name="Ohtani K."/>
            <person name="Treguer K."/>
            <person name="Dimmeler S."/>
        </authorList>
    </citation>
    <scope>INDUCTION</scope>
    <scope>DISRUPTION PHENOTYPE</scope>
    <scope>FUNCTION</scope>
</reference>
<accession>Q3TA59</accession>
<accession>A0A3B2W707</accession>
<accession>Q3U1Q1</accession>
<accession>Q91XD9</accession>
<accession>Q9D0L5</accession>
<protein>
    <recommendedName>
        <fullName evidence="6">JmjC domain-containing protein 8</fullName>
    </recommendedName>
    <alternativeName>
        <fullName>Jumonji domain-containing protein 8</fullName>
    </alternativeName>
</protein>
<name>JMJD8_MOUSE</name>
<sequence>MAAAGRRGLLLLFVLWMMVTVILPASGEGGWKQNGLGIAAAVMEEERCTVERRAHITYSEFMQHYAFLKPVILQGLTDNSKFRALCSRENLLASFGDNIVRLSTANTYSYQKVDLPFQEYVEQLLQPQDPASLGNDTLYFFGDNNFTEWASLFQHYSPPPFRLLGTTPAYSFGIAGAGSGVPFHWHGPGFSEVIYGRKRWFLYPPEKTPEFHPNKTTLAWLLEIYPSLALSARPLECTIQAGEVLYFPDRWWHATLNLDTSVFISTFLG</sequence>
<feature type="signal peptide" evidence="2">
    <location>
        <begin position="1"/>
        <end position="24"/>
    </location>
</feature>
<feature type="chain" id="PRO_0000344532" description="JmjC domain-containing protein 8" evidence="2">
    <location>
        <begin position="25"/>
        <end position="269"/>
    </location>
</feature>
<feature type="domain" description="JmjC" evidence="4">
    <location>
        <begin position="136"/>
        <end position="269"/>
    </location>
</feature>
<feature type="glycosylation site" description="N-linked (GlcNAc...) asparagine" evidence="3">
    <location>
        <position position="135"/>
    </location>
</feature>
<feature type="glycosylation site" description="N-linked (GlcNAc...) asparagine" evidence="3">
    <location>
        <position position="145"/>
    </location>
</feature>
<feature type="glycosylation site" description="N-linked (GlcNAc...) asparagine" evidence="3">
    <location>
        <position position="214"/>
    </location>
</feature>
<feature type="sequence conflict" description="In Ref. 1; BAB27534." evidence="6" ref="1">
    <original>F</original>
    <variation>L</variation>
    <location>
        <position position="67"/>
    </location>
</feature>
<gene>
    <name evidence="7" type="primary">Jmjd8</name>
</gene>
<proteinExistence type="evidence at transcript level"/>
<evidence type="ECO:0000250" key="1">
    <source>
        <dbReference type="UniProtKB" id="Q96S16"/>
    </source>
</evidence>
<evidence type="ECO:0000255" key="2"/>
<evidence type="ECO:0000255" key="3">
    <source>
        <dbReference type="PROSITE-ProRule" id="PRU00498"/>
    </source>
</evidence>
<evidence type="ECO:0000255" key="4">
    <source>
        <dbReference type="PROSITE-ProRule" id="PRU00538"/>
    </source>
</evidence>
<evidence type="ECO:0000269" key="5">
    <source>
    </source>
</evidence>
<evidence type="ECO:0000305" key="6"/>
<evidence type="ECO:0000312" key="7">
    <source>
        <dbReference type="MGI" id="MGI:1919356"/>
    </source>
</evidence>
<comment type="function">
    <text evidence="1 5">Functions as a positive regulator of TNF-induced NF-kappaB signaling (By similarity). Regulates angiogenesis and cellular metabolism through interaction with PKM (PubMed:27199445).</text>
</comment>
<comment type="subunit">
    <text evidence="1">Oligomer. Dimer. Interacts with PKM; regulates angiogenesis and metabolism.</text>
</comment>
<comment type="subcellular location">
    <subcellularLocation>
        <location evidence="1">Endoplasmic reticulum lumen</location>
    </subcellularLocation>
    <subcellularLocation>
        <location evidence="1">Cytoplasm</location>
    </subcellularLocation>
</comment>
<comment type="induction">
    <text evidence="5">Up-regulated upon endothelial differentiation.</text>
</comment>
<comment type="PTM">
    <text evidence="1">N-glycosylated.</text>
</comment>
<comment type="disruption phenotype">
    <text evidence="5">Homozygote knockout Jmjd8 show no obvious phenotype. However, the number of capillaries in muscle tissue is significantly reduced.</text>
</comment>
<comment type="sequence caution" evidence="6">
    <conflict type="erroneous initiation">
        <sequence resource="EMBL-CDS" id="AAH10800"/>
    </conflict>
    <text>Truncated N-terminus.</text>
</comment>
<comment type="sequence caution" evidence="6">
    <conflict type="erroneous initiation">
        <sequence resource="EMBL-CDS" id="BAB27534"/>
    </conflict>
    <text>Extended N-terminus.</text>
</comment>
<comment type="sequence caution" evidence="6">
    <conflict type="erroneous initiation">
        <sequence resource="EMBL-CDS" id="BAE28331"/>
    </conflict>
    <text>Extended N-terminus.</text>
</comment>
<comment type="sequence caution" evidence="6">
    <conflict type="erroneous initiation">
        <sequence resource="EMBL-CDS" id="BAE33443"/>
    </conflict>
    <text>Extended N-terminus.</text>
</comment>
<comment type="sequence caution" evidence="6">
    <conflict type="frameshift">
        <sequence resource="EMBL-CDS" id="BAE42811"/>
    </conflict>
</comment>